<organism>
    <name type="scientific">Moorella thermoacetica</name>
    <name type="common">Clostridium thermoaceticum</name>
    <dbReference type="NCBI Taxonomy" id="1525"/>
    <lineage>
        <taxon>Bacteria</taxon>
        <taxon>Bacillati</taxon>
        <taxon>Bacillota</taxon>
        <taxon>Clostridia</taxon>
        <taxon>Moorellales</taxon>
        <taxon>Moorellaceae</taxon>
        <taxon>Moorella</taxon>
    </lineage>
</organism>
<keyword id="KW-0002">3D-structure</keyword>
<keyword id="KW-0067">ATP-binding</keyword>
<keyword id="KW-0436">Ligase</keyword>
<keyword id="KW-0547">Nucleotide-binding</keyword>
<keyword id="KW-0554">One-carbon metabolism</keyword>
<dbReference type="EC" id="6.3.4.3" evidence="1"/>
<dbReference type="EMBL" id="J02911">
    <property type="protein sequence ID" value="AAA23240.1"/>
    <property type="molecule type" value="Genomic_DNA"/>
</dbReference>
<dbReference type="PIR" id="A35942">
    <property type="entry name" value="A35942"/>
</dbReference>
<dbReference type="PDB" id="1EG7">
    <property type="method" value="X-ray"/>
    <property type="resolution" value="2.50 A"/>
    <property type="chains" value="A/B=1-559"/>
</dbReference>
<dbReference type="PDB" id="1FP7">
    <property type="method" value="X-ray"/>
    <property type="resolution" value="3.20 A"/>
    <property type="chains" value="A/B=1-559"/>
</dbReference>
<dbReference type="PDB" id="1FPM">
    <property type="method" value="X-ray"/>
    <property type="resolution" value="3.00 A"/>
    <property type="chains" value="A/B=1-559"/>
</dbReference>
<dbReference type="PDB" id="3QUS">
    <property type="method" value="X-ray"/>
    <property type="resolution" value="2.84 A"/>
    <property type="chains" value="A/B=1-559"/>
</dbReference>
<dbReference type="PDB" id="4JIM">
    <property type="method" value="X-ray"/>
    <property type="resolution" value="2.20 A"/>
    <property type="chains" value="A/B=1-559"/>
</dbReference>
<dbReference type="PDB" id="4JJK">
    <property type="method" value="X-ray"/>
    <property type="resolution" value="3.00 A"/>
    <property type="chains" value="A/B=1-559"/>
</dbReference>
<dbReference type="PDB" id="4JJZ">
    <property type="method" value="X-ray"/>
    <property type="resolution" value="2.50 A"/>
    <property type="chains" value="A/B=1-559"/>
</dbReference>
<dbReference type="PDB" id="4JKI">
    <property type="method" value="X-ray"/>
    <property type="resolution" value="2.67 A"/>
    <property type="chains" value="A/B=1-559"/>
</dbReference>
<dbReference type="PDBsum" id="1EG7"/>
<dbReference type="PDBsum" id="1FP7"/>
<dbReference type="PDBsum" id="1FPM"/>
<dbReference type="PDBsum" id="3QUS"/>
<dbReference type="PDBsum" id="4JIM"/>
<dbReference type="PDBsum" id="4JJK"/>
<dbReference type="PDBsum" id="4JJZ"/>
<dbReference type="PDBsum" id="4JKI"/>
<dbReference type="SMR" id="P21164"/>
<dbReference type="BioCyc" id="MetaCyc:FORMYLSYNTHCLTH-MONOMER"/>
<dbReference type="BRENDA" id="6.3.4.3">
    <property type="organism ID" value="1528"/>
</dbReference>
<dbReference type="UniPathway" id="UPA00193"/>
<dbReference type="EvolutionaryTrace" id="P21164"/>
<dbReference type="GO" id="GO:0005524">
    <property type="term" value="F:ATP binding"/>
    <property type="evidence" value="ECO:0007669"/>
    <property type="project" value="UniProtKB-UniRule"/>
</dbReference>
<dbReference type="GO" id="GO:0004329">
    <property type="term" value="F:formate-tetrahydrofolate ligase activity"/>
    <property type="evidence" value="ECO:0007669"/>
    <property type="project" value="UniProtKB-UniRule"/>
</dbReference>
<dbReference type="GO" id="GO:0035999">
    <property type="term" value="P:tetrahydrofolate interconversion"/>
    <property type="evidence" value="ECO:0007669"/>
    <property type="project" value="UniProtKB-UniRule"/>
</dbReference>
<dbReference type="CDD" id="cd00477">
    <property type="entry name" value="FTHFS"/>
    <property type="match status" value="1"/>
</dbReference>
<dbReference type="FunFam" id="3.30.1510.10:FF:000001">
    <property type="entry name" value="Formate--tetrahydrofolate ligase"/>
    <property type="match status" value="1"/>
</dbReference>
<dbReference type="FunFam" id="3.10.410.10:FF:000001">
    <property type="entry name" value="Putative formate--tetrahydrofolate ligase"/>
    <property type="match status" value="1"/>
</dbReference>
<dbReference type="Gene3D" id="3.30.1510.10">
    <property type="entry name" value="Domain 2, N(10)-formyltetrahydrofolate synthetase"/>
    <property type="match status" value="1"/>
</dbReference>
<dbReference type="Gene3D" id="3.10.410.10">
    <property type="entry name" value="Formyltetrahydrofolate synthetase, domain 3"/>
    <property type="match status" value="1"/>
</dbReference>
<dbReference type="Gene3D" id="3.40.50.300">
    <property type="entry name" value="P-loop containing nucleotide triphosphate hydrolases"/>
    <property type="match status" value="1"/>
</dbReference>
<dbReference type="HAMAP" id="MF_01543">
    <property type="entry name" value="FTHFS"/>
    <property type="match status" value="1"/>
</dbReference>
<dbReference type="InterPro" id="IPR000559">
    <property type="entry name" value="Formate_THF_ligase"/>
</dbReference>
<dbReference type="InterPro" id="IPR020628">
    <property type="entry name" value="Formate_THF_ligase_CS"/>
</dbReference>
<dbReference type="InterPro" id="IPR027417">
    <property type="entry name" value="P-loop_NTPase"/>
</dbReference>
<dbReference type="NCBIfam" id="NF010030">
    <property type="entry name" value="PRK13505.1"/>
    <property type="match status" value="1"/>
</dbReference>
<dbReference type="Pfam" id="PF01268">
    <property type="entry name" value="FTHFS"/>
    <property type="match status" value="1"/>
</dbReference>
<dbReference type="SUPFAM" id="SSF52540">
    <property type="entry name" value="P-loop containing nucleoside triphosphate hydrolases"/>
    <property type="match status" value="1"/>
</dbReference>
<dbReference type="PROSITE" id="PS00721">
    <property type="entry name" value="FTHFS_1"/>
    <property type="match status" value="1"/>
</dbReference>
<dbReference type="PROSITE" id="PS00722">
    <property type="entry name" value="FTHFS_2"/>
    <property type="match status" value="1"/>
</dbReference>
<feature type="chain" id="PRO_0000199361" description="Formate--tetrahydrofolate ligase">
    <location>
        <begin position="1"/>
        <end position="559"/>
    </location>
</feature>
<feature type="binding site" evidence="1">
    <location>
        <begin position="68"/>
        <end position="75"/>
    </location>
    <ligand>
        <name>ATP</name>
        <dbReference type="ChEBI" id="CHEBI:30616"/>
    </ligand>
</feature>
<feature type="helix" evidence="4">
    <location>
        <begin position="19"/>
        <end position="24"/>
    </location>
</feature>
<feature type="turn" evidence="4">
    <location>
        <begin position="25"/>
        <end position="27"/>
    </location>
</feature>
<feature type="helix" evidence="4">
    <location>
        <begin position="30"/>
        <end position="32"/>
    </location>
</feature>
<feature type="strand" evidence="4">
    <location>
        <begin position="33"/>
        <end position="39"/>
    </location>
</feature>
<feature type="strand" evidence="4">
    <location>
        <begin position="41"/>
        <end position="43"/>
    </location>
</feature>
<feature type="helix" evidence="4">
    <location>
        <begin position="46"/>
        <end position="51"/>
    </location>
</feature>
<feature type="strand" evidence="4">
    <location>
        <begin position="58"/>
        <end position="66"/>
    </location>
</feature>
<feature type="helix" evidence="4">
    <location>
        <begin position="74"/>
        <end position="87"/>
    </location>
</feature>
<feature type="strand" evidence="4">
    <location>
        <begin position="92"/>
        <end position="96"/>
    </location>
</feature>
<feature type="helix" evidence="4">
    <location>
        <begin position="103"/>
        <end position="106"/>
    </location>
</feature>
<feature type="strand" evidence="4">
    <location>
        <begin position="112"/>
        <end position="114"/>
    </location>
</feature>
<feature type="strand" evidence="4">
    <location>
        <begin position="117"/>
        <end position="120"/>
    </location>
</feature>
<feature type="helix" evidence="4">
    <location>
        <begin position="122"/>
        <end position="126"/>
    </location>
</feature>
<feature type="turn" evidence="4">
    <location>
        <begin position="127"/>
        <end position="130"/>
    </location>
</feature>
<feature type="helix" evidence="4">
    <location>
        <begin position="132"/>
        <end position="152"/>
    </location>
</feature>
<feature type="helix" evidence="4">
    <location>
        <begin position="161"/>
        <end position="163"/>
    </location>
</feature>
<feature type="strand" evidence="4">
    <location>
        <begin position="168"/>
        <end position="172"/>
    </location>
</feature>
<feature type="helix" evidence="4">
    <location>
        <begin position="175"/>
        <end position="177"/>
    </location>
</feature>
<feature type="strand" evidence="4">
    <location>
        <begin position="178"/>
        <end position="183"/>
    </location>
</feature>
<feature type="helix" evidence="6">
    <location>
        <begin position="187"/>
        <end position="189"/>
    </location>
</feature>
<feature type="strand" evidence="4">
    <location>
        <begin position="193"/>
        <end position="195"/>
    </location>
</feature>
<feature type="strand" evidence="4">
    <location>
        <begin position="197"/>
        <end position="199"/>
    </location>
</feature>
<feature type="helix" evidence="4">
    <location>
        <begin position="200"/>
        <end position="202"/>
    </location>
</feature>
<feature type="helix" evidence="4">
    <location>
        <begin position="204"/>
        <end position="211"/>
    </location>
</feature>
<feature type="helix" evidence="4">
    <location>
        <begin position="215"/>
        <end position="223"/>
    </location>
</feature>
<feature type="strand" evidence="4">
    <location>
        <begin position="226"/>
        <end position="230"/>
    </location>
</feature>
<feature type="strand" evidence="4">
    <location>
        <begin position="235"/>
        <end position="237"/>
    </location>
</feature>
<feature type="helix" evidence="4">
    <location>
        <begin position="239"/>
        <end position="241"/>
    </location>
</feature>
<feature type="helix" evidence="4">
    <location>
        <begin position="244"/>
        <end position="250"/>
    </location>
</feature>
<feature type="turn" evidence="4">
    <location>
        <begin position="251"/>
        <end position="255"/>
    </location>
</feature>
<feature type="strand" evidence="4">
    <location>
        <begin position="258"/>
        <end position="262"/>
    </location>
</feature>
<feature type="strand" evidence="4">
    <location>
        <begin position="267"/>
        <end position="270"/>
    </location>
</feature>
<feature type="strand" evidence="4">
    <location>
        <begin position="276"/>
        <end position="279"/>
    </location>
</feature>
<feature type="helix" evidence="4">
    <location>
        <begin position="285"/>
        <end position="294"/>
    </location>
</feature>
<feature type="strand" evidence="4">
    <location>
        <begin position="296"/>
        <end position="304"/>
    </location>
</feature>
<feature type="turn" evidence="4">
    <location>
        <begin position="306"/>
        <end position="308"/>
    </location>
</feature>
<feature type="helix" evidence="4">
    <location>
        <begin position="309"/>
        <end position="315"/>
    </location>
</feature>
<feature type="helix" evidence="4">
    <location>
        <begin position="317"/>
        <end position="321"/>
    </location>
</feature>
<feature type="strand" evidence="4">
    <location>
        <begin position="327"/>
        <end position="332"/>
    </location>
</feature>
<feature type="helix" evidence="4">
    <location>
        <begin position="334"/>
        <end position="339"/>
    </location>
</feature>
<feature type="turn" evidence="4">
    <location>
        <begin position="340"/>
        <end position="342"/>
    </location>
</feature>
<feature type="helix" evidence="4">
    <location>
        <begin position="345"/>
        <end position="347"/>
    </location>
</feature>
<feature type="helix" evidence="4">
    <location>
        <begin position="353"/>
        <end position="371"/>
    </location>
</feature>
<feature type="turn" evidence="4">
    <location>
        <begin position="372"/>
        <end position="374"/>
    </location>
</feature>
<feature type="strand" evidence="4">
    <location>
        <begin position="377"/>
        <end position="382"/>
    </location>
</feature>
<feature type="helix" evidence="4">
    <location>
        <begin position="389"/>
        <end position="398"/>
    </location>
</feature>
<feature type="turn" evidence="4">
    <location>
        <begin position="399"/>
        <end position="401"/>
    </location>
</feature>
<feature type="strand" evidence="4">
    <location>
        <begin position="402"/>
        <end position="407"/>
    </location>
</feature>
<feature type="turn" evidence="4">
    <location>
        <begin position="412"/>
        <end position="414"/>
    </location>
</feature>
<feature type="helix" evidence="4">
    <location>
        <begin position="415"/>
        <end position="419"/>
    </location>
</feature>
<feature type="helix" evidence="4">
    <location>
        <begin position="420"/>
        <end position="432"/>
    </location>
</feature>
<feature type="strand" evidence="5">
    <location>
        <begin position="443"/>
        <end position="445"/>
    </location>
</feature>
<feature type="helix" evidence="4">
    <location>
        <begin position="447"/>
        <end position="457"/>
    </location>
</feature>
<feature type="strand" evidence="4">
    <location>
        <begin position="462"/>
        <end position="466"/>
    </location>
</feature>
<feature type="helix" evidence="4">
    <location>
        <begin position="468"/>
        <end position="479"/>
    </location>
</feature>
<feature type="turn" evidence="4">
    <location>
        <begin position="480"/>
        <end position="484"/>
    </location>
</feature>
<feature type="strand" evidence="4">
    <location>
        <begin position="487"/>
        <end position="490"/>
    </location>
</feature>
<feature type="strand" evidence="4">
    <location>
        <begin position="495"/>
        <end position="498"/>
    </location>
</feature>
<feature type="strand" evidence="4">
    <location>
        <begin position="510"/>
        <end position="513"/>
    </location>
</feature>
<feature type="strand" evidence="4">
    <location>
        <begin position="517"/>
        <end position="519"/>
    </location>
</feature>
<feature type="turn" evidence="4">
    <location>
        <begin position="520"/>
        <end position="522"/>
    </location>
</feature>
<feature type="strand" evidence="4">
    <location>
        <begin position="523"/>
        <end position="527"/>
    </location>
</feature>
<feature type="helix" evidence="4">
    <location>
        <begin position="543"/>
        <end position="545"/>
    </location>
</feature>
<feature type="strand" evidence="4">
    <location>
        <begin position="551"/>
        <end position="555"/>
    </location>
</feature>
<comment type="catalytic activity">
    <reaction evidence="1">
        <text>(6S)-5,6,7,8-tetrahydrofolate + formate + ATP = (6R)-10-formyltetrahydrofolate + ADP + phosphate</text>
        <dbReference type="Rhea" id="RHEA:20221"/>
        <dbReference type="ChEBI" id="CHEBI:15740"/>
        <dbReference type="ChEBI" id="CHEBI:30616"/>
        <dbReference type="ChEBI" id="CHEBI:43474"/>
        <dbReference type="ChEBI" id="CHEBI:57453"/>
        <dbReference type="ChEBI" id="CHEBI:195366"/>
        <dbReference type="ChEBI" id="CHEBI:456216"/>
        <dbReference type="EC" id="6.3.4.3"/>
    </reaction>
</comment>
<comment type="pathway">
    <text evidence="1">One-carbon metabolism; tetrahydrofolate interconversion.</text>
</comment>
<comment type="subunit">
    <text evidence="2 3">Homotetramer.</text>
</comment>
<comment type="miscellaneous">
    <text>Binding of monovalent cations contributes to thermal stability.</text>
</comment>
<comment type="similarity">
    <text evidence="1">Belongs to the formate--tetrahydrofolate ligase family.</text>
</comment>
<protein>
    <recommendedName>
        <fullName evidence="1">Formate--tetrahydrofolate ligase</fullName>
        <ecNumber evidence="1">6.3.4.3</ecNumber>
    </recommendedName>
    <alternativeName>
        <fullName evidence="1">Formyltetrahydrofolate synthetase</fullName>
        <shortName evidence="1">FHS</shortName>
        <shortName evidence="1">FTHFS</shortName>
    </alternativeName>
</protein>
<proteinExistence type="evidence at protein level"/>
<evidence type="ECO:0000255" key="1">
    <source>
        <dbReference type="HAMAP-Rule" id="MF_01543"/>
    </source>
</evidence>
<evidence type="ECO:0000269" key="2">
    <source>
    </source>
</evidence>
<evidence type="ECO:0000269" key="3">
    <source>
    </source>
</evidence>
<evidence type="ECO:0007829" key="4">
    <source>
        <dbReference type="PDB" id="1EG7"/>
    </source>
</evidence>
<evidence type="ECO:0007829" key="5">
    <source>
        <dbReference type="PDB" id="1FP7"/>
    </source>
</evidence>
<evidence type="ECO:0007829" key="6">
    <source>
        <dbReference type="PDB" id="3QUS"/>
    </source>
</evidence>
<accession>P21164</accession>
<reference key="1">
    <citation type="journal article" date="1990" name="Biochemistry">
        <title>Primary structure of the thermostable formyltetrahydrofolate synthetase from Clostridium thermoaceticum.</title>
        <authorList>
            <person name="Lovell C.R."/>
            <person name="Przybyla A."/>
            <person name="Ljungdahl L.G."/>
        </authorList>
    </citation>
    <scope>NUCLEOTIDE SEQUENCE [GENOMIC DNA]</scope>
</reference>
<reference key="2">
    <citation type="journal article" date="2000" name="Biochemistry">
        <title>The crystal structure of N(10)-formyltetrahydrofolate synthetase from Moorella thermoacetica.</title>
        <authorList>
            <person name="Radfar R."/>
            <person name="Shin R."/>
            <person name="Sheldrick G.M."/>
            <person name="Minor W."/>
            <person name="Lovell C.R."/>
            <person name="Odom J.D."/>
            <person name="Dunlap R.B."/>
            <person name="Lebioda L."/>
        </authorList>
    </citation>
    <scope>X-RAY CRYSTALLOGRAPHY (2.5 ANGSTROMS)</scope>
    <scope>SUBUNIT</scope>
</reference>
<reference key="3">
    <citation type="journal article" date="2000" name="Biochemistry">
        <title>Cation binding and thermostability of FTHFS monovalent cation binding sites and thermostability of N10-formyltetrahydrofolate synthetase from Moorella thermoacetica.</title>
        <authorList>
            <person name="Radfar R."/>
            <person name="Leaphart A."/>
            <person name="Brewer J.M."/>
            <person name="Minor W."/>
            <person name="Odom J.D."/>
            <person name="Dunlap R.B."/>
            <person name="Lovell C.R."/>
            <person name="Lebioda L."/>
        </authorList>
    </citation>
    <scope>X-RAY CRYSTALLOGRAPHY (3.0 ANGSTROMS) IN COMPLEX WITH MONOVALENT CATIONS</scope>
</reference>
<gene>
    <name evidence="1" type="primary">fhs</name>
</gene>
<sequence>MSKVPSDIEIAQAAKMKPVMELARGLGIQEDEVELYGKYKAKISLDVYRRLKDKPDGKLILVTAITPTPAGEGKTTTSVGLTDALARLGKRVMVCLREPSLGPSFGIKGGAAGGGYAQVVPMEDINLHFTGDIHAVTYAHNLLAAMVDNHLQQGNVLNIDPRTITWRRVIDLNDRALRNIVIGLGGKANGVPRETGFDISVASEVMACLCLASDLMDLKERFSRIVVGYTYDGKPVTAGDLEAQGSMALLMKDAIKPNLVQTLENTPAFIHGGPFANIAHGCNSIIATKTALKLADYVVTEAGFGADLGAEKFYDVKCRYAGFKPDATVIVATVRALKMHGGVPKSDLATENLEALREGFANLEKHIENIGKFGVPAVVAINAFPTDTEAELNLLYELCAKAGAEVALSEVWAKGGEGGLELARKVLQTLESRPSNFHVLYNLDLSIKDKIAKIATEIYGADGVNYTAEADKAIQRYESLGYGNLPVVMAKTQYSFSDDMTKLGRPRNFTITVREVRLSAGGRLIVPITGAIMTMPGLPKRPAACNIDIDADGVITGLF</sequence>
<name>FTHS_MOOTH</name>